<evidence type="ECO:0000250" key="1"/>
<evidence type="ECO:0000255" key="2">
    <source>
        <dbReference type="PROSITE-ProRule" id="PRU00239"/>
    </source>
</evidence>
<evidence type="ECO:0000255" key="3">
    <source>
        <dbReference type="PROSITE-ProRule" id="PRU00448"/>
    </source>
</evidence>
<evidence type="ECO:0000256" key="4">
    <source>
        <dbReference type="SAM" id="MobiDB-lite"/>
    </source>
</evidence>
<evidence type="ECO:0000269" key="5">
    <source>
    </source>
</evidence>
<evidence type="ECO:0000269" key="6">
    <source>
    </source>
</evidence>
<evidence type="ECO:0000305" key="7"/>
<dbReference type="EC" id="3.4.22.-"/>
<dbReference type="EMBL" id="AK314054">
    <property type="protein sequence ID" value="BAG36761.1"/>
    <property type="status" value="ALT_INIT"/>
    <property type="molecule type" value="mRNA"/>
</dbReference>
<dbReference type="EMBL" id="AL365192">
    <property type="status" value="NOT_ANNOTATED_CDS"/>
    <property type="molecule type" value="Genomic_DNA"/>
</dbReference>
<dbReference type="EMBL" id="CH471081">
    <property type="protein sequence ID" value="EAX04250.1"/>
    <property type="molecule type" value="Genomic_DNA"/>
</dbReference>
<dbReference type="EMBL" id="BC033733">
    <property type="protein sequence ID" value="AAH33733.1"/>
    <property type="status" value="ALT_INIT"/>
    <property type="molecule type" value="mRNA"/>
</dbReference>
<dbReference type="EMBL" id="AJ242832">
    <property type="protein sequence ID" value="CAB52137.1"/>
    <property type="status" value="ALT_INIT"/>
    <property type="molecule type" value="mRNA"/>
</dbReference>
<dbReference type="CCDS" id="CCDS47436.1"/>
<dbReference type="RefSeq" id="NP_008989.2">
    <property type="nucleotide sequence ID" value="NM_007058.4"/>
</dbReference>
<dbReference type="SMR" id="Q9UMQ6"/>
<dbReference type="BioGRID" id="116304">
    <property type="interactions" value="18"/>
</dbReference>
<dbReference type="FunCoup" id="Q9UMQ6">
    <property type="interactions" value="217"/>
</dbReference>
<dbReference type="IntAct" id="Q9UMQ6">
    <property type="interactions" value="7"/>
</dbReference>
<dbReference type="MINT" id="Q9UMQ6"/>
<dbReference type="STRING" id="9606.ENSP00000381758"/>
<dbReference type="MEROPS" id="C02.013"/>
<dbReference type="GlyGen" id="Q9UMQ6">
    <property type="glycosylation" value="1 site, 1 O-linked glycan (1 site)"/>
</dbReference>
<dbReference type="iPTMnet" id="Q9UMQ6"/>
<dbReference type="PhosphoSitePlus" id="Q9UMQ6"/>
<dbReference type="BioMuta" id="CAPN11"/>
<dbReference type="DMDM" id="218511961"/>
<dbReference type="MassIVE" id="Q9UMQ6"/>
<dbReference type="PaxDb" id="9606-ENSP00000381758"/>
<dbReference type="PeptideAtlas" id="Q9UMQ6"/>
<dbReference type="ProteomicsDB" id="85193"/>
<dbReference type="Antibodypedia" id="4328">
    <property type="antibodies" value="173 antibodies from 26 providers"/>
</dbReference>
<dbReference type="DNASU" id="11131"/>
<dbReference type="Ensembl" id="ENST00000398776.2">
    <property type="protein sequence ID" value="ENSP00000381758.1"/>
    <property type="gene ID" value="ENSG00000137225.13"/>
</dbReference>
<dbReference type="GeneID" id="11131"/>
<dbReference type="KEGG" id="hsa:11131"/>
<dbReference type="MANE-Select" id="ENST00000398776.2">
    <property type="protein sequence ID" value="ENSP00000381758.1"/>
    <property type="RefSeq nucleotide sequence ID" value="NM_007058.4"/>
    <property type="RefSeq protein sequence ID" value="NP_008989.2"/>
</dbReference>
<dbReference type="UCSC" id="uc003owt.1">
    <property type="organism name" value="human"/>
</dbReference>
<dbReference type="AGR" id="HGNC:1478"/>
<dbReference type="CTD" id="11131"/>
<dbReference type="DisGeNET" id="11131"/>
<dbReference type="GeneCards" id="CAPN11"/>
<dbReference type="HGNC" id="HGNC:1478">
    <property type="gene designation" value="CAPN11"/>
</dbReference>
<dbReference type="HPA" id="ENSG00000137225">
    <property type="expression patterns" value="Tissue enriched (testis)"/>
</dbReference>
<dbReference type="MIM" id="604822">
    <property type="type" value="gene"/>
</dbReference>
<dbReference type="neXtProt" id="NX_Q9UMQ6"/>
<dbReference type="OpenTargets" id="ENSG00000137225"/>
<dbReference type="PharmGKB" id="PA26059"/>
<dbReference type="VEuPathDB" id="HostDB:ENSG00000137225"/>
<dbReference type="eggNOG" id="KOG0045">
    <property type="taxonomic scope" value="Eukaryota"/>
</dbReference>
<dbReference type="GeneTree" id="ENSGT00940000158672"/>
<dbReference type="HOGENOM" id="CLU_010982_0_1_1"/>
<dbReference type="InParanoid" id="Q9UMQ6"/>
<dbReference type="OMA" id="KVNNKVM"/>
<dbReference type="OrthoDB" id="424753at2759"/>
<dbReference type="PAN-GO" id="Q9UMQ6">
    <property type="GO annotations" value="3 GO annotations based on evolutionary models"/>
</dbReference>
<dbReference type="PhylomeDB" id="Q9UMQ6"/>
<dbReference type="TreeFam" id="TF314748"/>
<dbReference type="BRENDA" id="3.4.22.B31">
    <property type="organism ID" value="2681"/>
</dbReference>
<dbReference type="PathwayCommons" id="Q9UMQ6"/>
<dbReference type="Reactome" id="R-HSA-1474228">
    <property type="pathway name" value="Degradation of the extracellular matrix"/>
</dbReference>
<dbReference type="SignaLink" id="Q9UMQ6"/>
<dbReference type="BioGRID-ORCS" id="11131">
    <property type="hits" value="16 hits in 1147 CRISPR screens"/>
</dbReference>
<dbReference type="GenomeRNAi" id="11131"/>
<dbReference type="Pharos" id="Q9UMQ6">
    <property type="development level" value="Tbio"/>
</dbReference>
<dbReference type="PRO" id="PR:Q9UMQ6"/>
<dbReference type="Proteomes" id="UP000005640">
    <property type="component" value="Chromosome 6"/>
</dbReference>
<dbReference type="RNAct" id="Q9UMQ6">
    <property type="molecule type" value="protein"/>
</dbReference>
<dbReference type="Bgee" id="ENSG00000137225">
    <property type="expression patterns" value="Expressed in left testis and 104 other cell types or tissues"/>
</dbReference>
<dbReference type="ExpressionAtlas" id="Q9UMQ6">
    <property type="expression patterns" value="baseline and differential"/>
</dbReference>
<dbReference type="GO" id="GO:0001669">
    <property type="term" value="C:acrosomal vesicle"/>
    <property type="evidence" value="ECO:0007669"/>
    <property type="project" value="UniProtKB-SubCell"/>
</dbReference>
<dbReference type="GO" id="GO:0005737">
    <property type="term" value="C:cytoplasm"/>
    <property type="evidence" value="ECO:0000318"/>
    <property type="project" value="GO_Central"/>
</dbReference>
<dbReference type="GO" id="GO:0005509">
    <property type="term" value="F:calcium ion binding"/>
    <property type="evidence" value="ECO:0007669"/>
    <property type="project" value="InterPro"/>
</dbReference>
<dbReference type="GO" id="GO:0004198">
    <property type="term" value="F:calcium-dependent cysteine-type endopeptidase activity"/>
    <property type="evidence" value="ECO:0000318"/>
    <property type="project" value="GO_Central"/>
</dbReference>
<dbReference type="GO" id="GO:0008233">
    <property type="term" value="F:peptidase activity"/>
    <property type="evidence" value="ECO:0000304"/>
    <property type="project" value="ProtInc"/>
</dbReference>
<dbReference type="GO" id="GO:0006508">
    <property type="term" value="P:proteolysis"/>
    <property type="evidence" value="ECO:0000318"/>
    <property type="project" value="GO_Central"/>
</dbReference>
<dbReference type="CDD" id="cd00214">
    <property type="entry name" value="Calpain_III"/>
    <property type="match status" value="1"/>
</dbReference>
<dbReference type="CDD" id="cd00044">
    <property type="entry name" value="CysPc"/>
    <property type="match status" value="1"/>
</dbReference>
<dbReference type="FunFam" id="2.60.120.380:FF:000001">
    <property type="entry name" value="Calpain-1 catalytic subunit"/>
    <property type="match status" value="1"/>
</dbReference>
<dbReference type="FunFam" id="3.90.70.10:FF:000001">
    <property type="entry name" value="Calpain-1 catalytic subunit"/>
    <property type="match status" value="1"/>
</dbReference>
<dbReference type="FunFam" id="1.10.238.10:FF:000065">
    <property type="entry name" value="calpain-3 isoform X1"/>
    <property type="match status" value="1"/>
</dbReference>
<dbReference type="Gene3D" id="2.60.120.380">
    <property type="match status" value="1"/>
</dbReference>
<dbReference type="Gene3D" id="3.90.70.10">
    <property type="entry name" value="Cysteine proteinases"/>
    <property type="match status" value="1"/>
</dbReference>
<dbReference type="Gene3D" id="1.10.238.10">
    <property type="entry name" value="EF-hand"/>
    <property type="match status" value="1"/>
</dbReference>
<dbReference type="InterPro" id="IPR033883">
    <property type="entry name" value="C2_III"/>
</dbReference>
<dbReference type="InterPro" id="IPR022684">
    <property type="entry name" value="Calpain_cysteine_protease"/>
</dbReference>
<dbReference type="InterPro" id="IPR022682">
    <property type="entry name" value="Calpain_domain_III"/>
</dbReference>
<dbReference type="InterPro" id="IPR022683">
    <property type="entry name" value="Calpain_III"/>
</dbReference>
<dbReference type="InterPro" id="IPR036213">
    <property type="entry name" value="Calpain_III_sf"/>
</dbReference>
<dbReference type="InterPro" id="IPR011992">
    <property type="entry name" value="EF-hand-dom_pair"/>
</dbReference>
<dbReference type="InterPro" id="IPR018247">
    <property type="entry name" value="EF_Hand_1_Ca_BS"/>
</dbReference>
<dbReference type="InterPro" id="IPR002048">
    <property type="entry name" value="EF_hand_dom"/>
</dbReference>
<dbReference type="InterPro" id="IPR038765">
    <property type="entry name" value="Papain-like_cys_pep_sf"/>
</dbReference>
<dbReference type="InterPro" id="IPR000169">
    <property type="entry name" value="Pept_cys_AS"/>
</dbReference>
<dbReference type="InterPro" id="IPR001300">
    <property type="entry name" value="Peptidase_C2_calpain_cat"/>
</dbReference>
<dbReference type="PANTHER" id="PTHR10183">
    <property type="entry name" value="CALPAIN"/>
    <property type="match status" value="1"/>
</dbReference>
<dbReference type="PANTHER" id="PTHR10183:SF322">
    <property type="entry name" value="CALPAIN-11"/>
    <property type="match status" value="1"/>
</dbReference>
<dbReference type="Pfam" id="PF01067">
    <property type="entry name" value="Calpain_III"/>
    <property type="match status" value="1"/>
</dbReference>
<dbReference type="Pfam" id="PF13833">
    <property type="entry name" value="EF-hand_8"/>
    <property type="match status" value="1"/>
</dbReference>
<dbReference type="Pfam" id="PF00648">
    <property type="entry name" value="Peptidase_C2"/>
    <property type="match status" value="1"/>
</dbReference>
<dbReference type="PRINTS" id="PR00704">
    <property type="entry name" value="CALPAIN"/>
</dbReference>
<dbReference type="SMART" id="SM00720">
    <property type="entry name" value="calpain_III"/>
    <property type="match status" value="1"/>
</dbReference>
<dbReference type="SMART" id="SM00230">
    <property type="entry name" value="CysPc"/>
    <property type="match status" value="1"/>
</dbReference>
<dbReference type="SMART" id="SM00054">
    <property type="entry name" value="EFh"/>
    <property type="match status" value="2"/>
</dbReference>
<dbReference type="SUPFAM" id="SSF49758">
    <property type="entry name" value="Calpain large subunit, middle domain (domain III)"/>
    <property type="match status" value="1"/>
</dbReference>
<dbReference type="SUPFAM" id="SSF54001">
    <property type="entry name" value="Cysteine proteinases"/>
    <property type="match status" value="1"/>
</dbReference>
<dbReference type="SUPFAM" id="SSF47473">
    <property type="entry name" value="EF-hand"/>
    <property type="match status" value="1"/>
</dbReference>
<dbReference type="PROSITE" id="PS50203">
    <property type="entry name" value="CALPAIN_CAT"/>
    <property type="match status" value="1"/>
</dbReference>
<dbReference type="PROSITE" id="PS00018">
    <property type="entry name" value="EF_HAND_1"/>
    <property type="match status" value="2"/>
</dbReference>
<dbReference type="PROSITE" id="PS50222">
    <property type="entry name" value="EF_HAND_2"/>
    <property type="match status" value="2"/>
</dbReference>
<dbReference type="PROSITE" id="PS00139">
    <property type="entry name" value="THIOL_PROTEASE_CYS"/>
    <property type="match status" value="1"/>
</dbReference>
<sequence length="739" mass="84423">MLYSPGPSLPESAESLDGSQEDKPRGSCAEPTFTDTGMVAHINNSRLKAKGVGQHDNAQNFGNQSFEELRAACLRKGELFEDPLFPAEPSSLGFKDLGPNSKNVQNISWQRPKDIINNPLFIMDGISPTDICQGILGDCWLLAAIGSLTTCPKLLYRVVPRGQSFKKNYAGIFHFQIWQFGQWVNVVVDDRLPTKNDKLVFVHSTERSEFWSALLEKAYAKLSGSYEALSGGSTMEGLEDFTGGVAQSFQLQRPPQNLLRLLRKAVERSSLMGCSIEVTSDSELESMTDKMLVRGHAYSVTGLQDVHYRGKMETLIRVRNPWGRIEWNGAWSDSAREWEEVASDIQMQLLHKTEDGEFWMSYQDFLNNFTLLEICNLTPDTLSGDYKSYWHTTFYEGSWRRGSSAGGCRNHPGTFWTNPQFKISLPEGDDPEDDAEGNVVVCTCLVALMQKNWRHARQQGAQLQTIGFVLYAVPKEFQNIQDVHLKKEFFTKYQDHGFSEIFTNSREVSSQLRLPPGEYIIIPSTFEPHRDADFLLRVFTEKHSESWELDEVNYAEQLQEEKVSEDDMDQDFLHLFKIVAGEGKEIGVYELQRLLNRMAIKFKSFKTKGFGLDACRCMINLMDKDGSGKLGLLEFKILWKKLKKWMDIFRECDQDHSGTLNSYEMRLVIEKAGIKLNNKVMQVLVARYADDDLIIDFDSFISCFLRLKTMFTFFLTMDPKNTGHICLSLEQWLQMTMWG</sequence>
<keyword id="KW-0106">Calcium</keyword>
<keyword id="KW-0968">Cytoplasmic vesicle</keyword>
<keyword id="KW-0378">Hydrolase</keyword>
<keyword id="KW-0479">Metal-binding</keyword>
<keyword id="KW-0645">Protease</keyword>
<keyword id="KW-1267">Proteomics identification</keyword>
<keyword id="KW-1185">Reference proteome</keyword>
<keyword id="KW-0677">Repeat</keyword>
<keyword id="KW-0788">Thiol protease</keyword>
<feature type="chain" id="PRO_0000207729" description="Calpain-11">
    <location>
        <begin position="1"/>
        <end position="739"/>
    </location>
</feature>
<feature type="domain" description="Calpain catalytic" evidence="2">
    <location>
        <begin position="79"/>
        <end position="378"/>
    </location>
</feature>
<feature type="domain" description="EF-hand 1" evidence="3">
    <location>
        <begin position="610"/>
        <end position="636"/>
    </location>
</feature>
<feature type="domain" description="EF-hand 2" evidence="3">
    <location>
        <begin position="640"/>
        <end position="675"/>
    </location>
</feature>
<feature type="region of interest" description="Disordered" evidence="4">
    <location>
        <begin position="1"/>
        <end position="34"/>
    </location>
</feature>
<feature type="region of interest" description="Domain III">
    <location>
        <begin position="379"/>
        <end position="551"/>
    </location>
</feature>
<feature type="region of interest" description="Linker">
    <location>
        <begin position="552"/>
        <end position="567"/>
    </location>
</feature>
<feature type="region of interest" description="Domain IV">
    <location>
        <begin position="568"/>
        <end position="738"/>
    </location>
</feature>
<feature type="active site" evidence="1">
    <location>
        <position position="139"/>
    </location>
</feature>
<feature type="active site" evidence="1">
    <location>
        <position position="296"/>
    </location>
</feature>
<feature type="active site" evidence="1">
    <location>
        <position position="320"/>
    </location>
</feature>
<feature type="binding site" evidence="3">
    <location>
        <position position="623"/>
    </location>
    <ligand>
        <name>Ca(2+)</name>
        <dbReference type="ChEBI" id="CHEBI:29108"/>
        <label>1</label>
    </ligand>
</feature>
<feature type="binding site" evidence="3">
    <location>
        <position position="625"/>
    </location>
    <ligand>
        <name>Ca(2+)</name>
        <dbReference type="ChEBI" id="CHEBI:29108"/>
        <label>1</label>
    </ligand>
</feature>
<feature type="binding site" evidence="3">
    <location>
        <position position="627"/>
    </location>
    <ligand>
        <name>Ca(2+)</name>
        <dbReference type="ChEBI" id="CHEBI:29108"/>
        <label>1</label>
    </ligand>
</feature>
<feature type="binding site" evidence="3">
    <location>
        <position position="629"/>
    </location>
    <ligand>
        <name>Ca(2+)</name>
        <dbReference type="ChEBI" id="CHEBI:29108"/>
        <label>1</label>
    </ligand>
</feature>
<feature type="binding site" evidence="3">
    <location>
        <position position="634"/>
    </location>
    <ligand>
        <name>Ca(2+)</name>
        <dbReference type="ChEBI" id="CHEBI:29108"/>
        <label>1</label>
    </ligand>
</feature>
<feature type="binding site" evidence="3">
    <location>
        <position position="653"/>
    </location>
    <ligand>
        <name>Ca(2+)</name>
        <dbReference type="ChEBI" id="CHEBI:29108"/>
        <label>2</label>
    </ligand>
</feature>
<feature type="binding site" evidence="3">
    <location>
        <position position="655"/>
    </location>
    <ligand>
        <name>Ca(2+)</name>
        <dbReference type="ChEBI" id="CHEBI:29108"/>
        <label>2</label>
    </ligand>
</feature>
<feature type="binding site" evidence="3">
    <location>
        <position position="657"/>
    </location>
    <ligand>
        <name>Ca(2+)</name>
        <dbReference type="ChEBI" id="CHEBI:29108"/>
        <label>2</label>
    </ligand>
</feature>
<feature type="binding site" evidence="3">
    <location>
        <position position="659"/>
    </location>
    <ligand>
        <name>Ca(2+)</name>
        <dbReference type="ChEBI" id="CHEBI:29108"/>
        <label>2</label>
    </ligand>
</feature>
<feature type="binding site" evidence="3">
    <location>
        <position position="664"/>
    </location>
    <ligand>
        <name>Ca(2+)</name>
        <dbReference type="ChEBI" id="CHEBI:29108"/>
        <label>2</label>
    </ligand>
</feature>
<feature type="sequence variant" id="VAR_033713" description="In dbSNP:rs6938938.">
    <original>V</original>
    <variation>M</variation>
    <location>
        <position position="266"/>
    </location>
</feature>
<feature type="sequence variant" id="VAR_033714" description="In dbSNP:rs16871612." evidence="6">
    <original>V</original>
    <variation>A</variation>
    <location>
        <position position="441"/>
    </location>
</feature>
<feature type="sequence variant" id="VAR_033715" description="In dbSNP:rs34710081.">
    <original>I</original>
    <variation>V</variation>
    <location>
        <position position="521"/>
    </location>
</feature>
<feature type="sequence variant" id="VAR_033716" description="In dbSNP:rs35527493.">
    <original>S</original>
    <variation>R</variation>
    <location>
        <position position="544"/>
    </location>
</feature>
<feature type="sequence variant" id="VAR_024587" description="In dbSNP:rs7761137.">
    <original>S</original>
    <variation>N</variation>
    <location>
        <position position="728"/>
    </location>
</feature>
<organism>
    <name type="scientific">Homo sapiens</name>
    <name type="common">Human</name>
    <dbReference type="NCBI Taxonomy" id="9606"/>
    <lineage>
        <taxon>Eukaryota</taxon>
        <taxon>Metazoa</taxon>
        <taxon>Chordata</taxon>
        <taxon>Craniata</taxon>
        <taxon>Vertebrata</taxon>
        <taxon>Euteleostomi</taxon>
        <taxon>Mammalia</taxon>
        <taxon>Eutheria</taxon>
        <taxon>Euarchontoglires</taxon>
        <taxon>Primates</taxon>
        <taxon>Haplorrhini</taxon>
        <taxon>Catarrhini</taxon>
        <taxon>Hominidae</taxon>
        <taxon>Homo</taxon>
    </lineage>
</organism>
<protein>
    <recommendedName>
        <fullName>Calpain-11</fullName>
        <ecNumber>3.4.22.-</ecNumber>
    </recommendedName>
    <alternativeName>
        <fullName>Calcium-activated neutral proteinase 11</fullName>
        <shortName>CANP 11</shortName>
    </alternativeName>
</protein>
<proteinExistence type="evidence at protein level"/>
<accession>Q9UMQ6</accession>
<accession>B2RA64</accession>
<accession>Q5T3G1</accession>
<accession>Q8N4R5</accession>
<reference key="1">
    <citation type="journal article" date="2004" name="Nat. Genet.">
        <title>Complete sequencing and characterization of 21,243 full-length human cDNAs.</title>
        <authorList>
            <person name="Ota T."/>
            <person name="Suzuki Y."/>
            <person name="Nishikawa T."/>
            <person name="Otsuki T."/>
            <person name="Sugiyama T."/>
            <person name="Irie R."/>
            <person name="Wakamatsu A."/>
            <person name="Hayashi K."/>
            <person name="Sato H."/>
            <person name="Nagai K."/>
            <person name="Kimura K."/>
            <person name="Makita H."/>
            <person name="Sekine M."/>
            <person name="Obayashi M."/>
            <person name="Nishi T."/>
            <person name="Shibahara T."/>
            <person name="Tanaka T."/>
            <person name="Ishii S."/>
            <person name="Yamamoto J."/>
            <person name="Saito K."/>
            <person name="Kawai Y."/>
            <person name="Isono Y."/>
            <person name="Nakamura Y."/>
            <person name="Nagahari K."/>
            <person name="Murakami K."/>
            <person name="Yasuda T."/>
            <person name="Iwayanagi T."/>
            <person name="Wagatsuma M."/>
            <person name="Shiratori A."/>
            <person name="Sudo H."/>
            <person name="Hosoiri T."/>
            <person name="Kaku Y."/>
            <person name="Kodaira H."/>
            <person name="Kondo H."/>
            <person name="Sugawara M."/>
            <person name="Takahashi M."/>
            <person name="Kanda K."/>
            <person name="Yokoi T."/>
            <person name="Furuya T."/>
            <person name="Kikkawa E."/>
            <person name="Omura Y."/>
            <person name="Abe K."/>
            <person name="Kamihara K."/>
            <person name="Katsuta N."/>
            <person name="Sato K."/>
            <person name="Tanikawa M."/>
            <person name="Yamazaki M."/>
            <person name="Ninomiya K."/>
            <person name="Ishibashi T."/>
            <person name="Yamashita H."/>
            <person name="Murakawa K."/>
            <person name="Fujimori K."/>
            <person name="Tanai H."/>
            <person name="Kimata M."/>
            <person name="Watanabe M."/>
            <person name="Hiraoka S."/>
            <person name="Chiba Y."/>
            <person name="Ishida S."/>
            <person name="Ono Y."/>
            <person name="Takiguchi S."/>
            <person name="Watanabe S."/>
            <person name="Yosida M."/>
            <person name="Hotuta T."/>
            <person name="Kusano J."/>
            <person name="Kanehori K."/>
            <person name="Takahashi-Fujii A."/>
            <person name="Hara H."/>
            <person name="Tanase T.-O."/>
            <person name="Nomura Y."/>
            <person name="Togiya S."/>
            <person name="Komai F."/>
            <person name="Hara R."/>
            <person name="Takeuchi K."/>
            <person name="Arita M."/>
            <person name="Imose N."/>
            <person name="Musashino K."/>
            <person name="Yuuki H."/>
            <person name="Oshima A."/>
            <person name="Sasaki N."/>
            <person name="Aotsuka S."/>
            <person name="Yoshikawa Y."/>
            <person name="Matsunawa H."/>
            <person name="Ichihara T."/>
            <person name="Shiohata N."/>
            <person name="Sano S."/>
            <person name="Moriya S."/>
            <person name="Momiyama H."/>
            <person name="Satoh N."/>
            <person name="Takami S."/>
            <person name="Terashima Y."/>
            <person name="Suzuki O."/>
            <person name="Nakagawa S."/>
            <person name="Senoh A."/>
            <person name="Mizoguchi H."/>
            <person name="Goto Y."/>
            <person name="Shimizu F."/>
            <person name="Wakebe H."/>
            <person name="Hishigaki H."/>
            <person name="Watanabe T."/>
            <person name="Sugiyama A."/>
            <person name="Takemoto M."/>
            <person name="Kawakami B."/>
            <person name="Yamazaki M."/>
            <person name="Watanabe K."/>
            <person name="Kumagai A."/>
            <person name="Itakura S."/>
            <person name="Fukuzumi Y."/>
            <person name="Fujimori Y."/>
            <person name="Komiyama M."/>
            <person name="Tashiro H."/>
            <person name="Tanigami A."/>
            <person name="Fujiwara T."/>
            <person name="Ono T."/>
            <person name="Yamada K."/>
            <person name="Fujii Y."/>
            <person name="Ozaki K."/>
            <person name="Hirao M."/>
            <person name="Ohmori Y."/>
            <person name="Kawabata A."/>
            <person name="Hikiji T."/>
            <person name="Kobatake N."/>
            <person name="Inagaki H."/>
            <person name="Ikema Y."/>
            <person name="Okamoto S."/>
            <person name="Okitani R."/>
            <person name="Kawakami T."/>
            <person name="Noguchi S."/>
            <person name="Itoh T."/>
            <person name="Shigeta K."/>
            <person name="Senba T."/>
            <person name="Matsumura K."/>
            <person name="Nakajima Y."/>
            <person name="Mizuno T."/>
            <person name="Morinaga M."/>
            <person name="Sasaki M."/>
            <person name="Togashi T."/>
            <person name="Oyama M."/>
            <person name="Hata H."/>
            <person name="Watanabe M."/>
            <person name="Komatsu T."/>
            <person name="Mizushima-Sugano J."/>
            <person name="Satoh T."/>
            <person name="Shirai Y."/>
            <person name="Takahashi Y."/>
            <person name="Nakagawa K."/>
            <person name="Okumura K."/>
            <person name="Nagase T."/>
            <person name="Nomura N."/>
            <person name="Kikuchi H."/>
            <person name="Masuho Y."/>
            <person name="Yamashita R."/>
            <person name="Nakai K."/>
            <person name="Yada T."/>
            <person name="Nakamura Y."/>
            <person name="Ohara O."/>
            <person name="Isogai T."/>
            <person name="Sugano S."/>
        </authorList>
    </citation>
    <scope>NUCLEOTIDE SEQUENCE [LARGE SCALE MRNA]</scope>
    <source>
        <tissue>Testis</tissue>
    </source>
</reference>
<reference key="2">
    <citation type="journal article" date="2003" name="Nature">
        <title>The DNA sequence and analysis of human chromosome 6.</title>
        <authorList>
            <person name="Mungall A.J."/>
            <person name="Palmer S.A."/>
            <person name="Sims S.K."/>
            <person name="Edwards C.A."/>
            <person name="Ashurst J.L."/>
            <person name="Wilming L."/>
            <person name="Jones M.C."/>
            <person name="Horton R."/>
            <person name="Hunt S.E."/>
            <person name="Scott C.E."/>
            <person name="Gilbert J.G.R."/>
            <person name="Clamp M.E."/>
            <person name="Bethel G."/>
            <person name="Milne S."/>
            <person name="Ainscough R."/>
            <person name="Almeida J.P."/>
            <person name="Ambrose K.D."/>
            <person name="Andrews T.D."/>
            <person name="Ashwell R.I.S."/>
            <person name="Babbage A.K."/>
            <person name="Bagguley C.L."/>
            <person name="Bailey J."/>
            <person name="Banerjee R."/>
            <person name="Barker D.J."/>
            <person name="Barlow K.F."/>
            <person name="Bates K."/>
            <person name="Beare D.M."/>
            <person name="Beasley H."/>
            <person name="Beasley O."/>
            <person name="Bird C.P."/>
            <person name="Blakey S.E."/>
            <person name="Bray-Allen S."/>
            <person name="Brook J."/>
            <person name="Brown A.J."/>
            <person name="Brown J.Y."/>
            <person name="Burford D.C."/>
            <person name="Burrill W."/>
            <person name="Burton J."/>
            <person name="Carder C."/>
            <person name="Carter N.P."/>
            <person name="Chapman J.C."/>
            <person name="Clark S.Y."/>
            <person name="Clark G."/>
            <person name="Clee C.M."/>
            <person name="Clegg S."/>
            <person name="Cobley V."/>
            <person name="Collier R.E."/>
            <person name="Collins J.E."/>
            <person name="Colman L.K."/>
            <person name="Corby N.R."/>
            <person name="Coville G.J."/>
            <person name="Culley K.M."/>
            <person name="Dhami P."/>
            <person name="Davies J."/>
            <person name="Dunn M."/>
            <person name="Earthrowl M.E."/>
            <person name="Ellington A.E."/>
            <person name="Evans K.A."/>
            <person name="Faulkner L."/>
            <person name="Francis M.D."/>
            <person name="Frankish A."/>
            <person name="Frankland J."/>
            <person name="French L."/>
            <person name="Garner P."/>
            <person name="Garnett J."/>
            <person name="Ghori M.J."/>
            <person name="Gilby L.M."/>
            <person name="Gillson C.J."/>
            <person name="Glithero R.J."/>
            <person name="Grafham D.V."/>
            <person name="Grant M."/>
            <person name="Gribble S."/>
            <person name="Griffiths C."/>
            <person name="Griffiths M.N.D."/>
            <person name="Hall R."/>
            <person name="Halls K.S."/>
            <person name="Hammond S."/>
            <person name="Harley J.L."/>
            <person name="Hart E.A."/>
            <person name="Heath P.D."/>
            <person name="Heathcott R."/>
            <person name="Holmes S.J."/>
            <person name="Howden P.J."/>
            <person name="Howe K.L."/>
            <person name="Howell G.R."/>
            <person name="Huckle E."/>
            <person name="Humphray S.J."/>
            <person name="Humphries M.D."/>
            <person name="Hunt A.R."/>
            <person name="Johnson C.M."/>
            <person name="Joy A.A."/>
            <person name="Kay M."/>
            <person name="Keenan S.J."/>
            <person name="Kimberley A.M."/>
            <person name="King A."/>
            <person name="Laird G.K."/>
            <person name="Langford C."/>
            <person name="Lawlor S."/>
            <person name="Leongamornlert D.A."/>
            <person name="Leversha M."/>
            <person name="Lloyd C.R."/>
            <person name="Lloyd D.M."/>
            <person name="Loveland J.E."/>
            <person name="Lovell J."/>
            <person name="Martin S."/>
            <person name="Mashreghi-Mohammadi M."/>
            <person name="Maslen G.L."/>
            <person name="Matthews L."/>
            <person name="McCann O.T."/>
            <person name="McLaren S.J."/>
            <person name="McLay K."/>
            <person name="McMurray A."/>
            <person name="Moore M.J.F."/>
            <person name="Mullikin J.C."/>
            <person name="Niblett D."/>
            <person name="Nickerson T."/>
            <person name="Novik K.L."/>
            <person name="Oliver K."/>
            <person name="Overton-Larty E.K."/>
            <person name="Parker A."/>
            <person name="Patel R."/>
            <person name="Pearce A.V."/>
            <person name="Peck A.I."/>
            <person name="Phillimore B.J.C.T."/>
            <person name="Phillips S."/>
            <person name="Plumb R.W."/>
            <person name="Porter K.M."/>
            <person name="Ramsey Y."/>
            <person name="Ranby S.A."/>
            <person name="Rice C.M."/>
            <person name="Ross M.T."/>
            <person name="Searle S.M."/>
            <person name="Sehra H.K."/>
            <person name="Sheridan E."/>
            <person name="Skuce C.D."/>
            <person name="Smith S."/>
            <person name="Smith M."/>
            <person name="Spraggon L."/>
            <person name="Squares S.L."/>
            <person name="Steward C.A."/>
            <person name="Sycamore N."/>
            <person name="Tamlyn-Hall G."/>
            <person name="Tester J."/>
            <person name="Theaker A.J."/>
            <person name="Thomas D.W."/>
            <person name="Thorpe A."/>
            <person name="Tracey A."/>
            <person name="Tromans A."/>
            <person name="Tubby B."/>
            <person name="Wall M."/>
            <person name="Wallis J.M."/>
            <person name="West A.P."/>
            <person name="White S.S."/>
            <person name="Whitehead S.L."/>
            <person name="Whittaker H."/>
            <person name="Wild A."/>
            <person name="Willey D.J."/>
            <person name="Wilmer T.E."/>
            <person name="Wood J.M."/>
            <person name="Wray P.W."/>
            <person name="Wyatt J.C."/>
            <person name="Young L."/>
            <person name="Younger R.M."/>
            <person name="Bentley D.R."/>
            <person name="Coulson A."/>
            <person name="Durbin R.M."/>
            <person name="Hubbard T."/>
            <person name="Sulston J.E."/>
            <person name="Dunham I."/>
            <person name="Rogers J."/>
            <person name="Beck S."/>
        </authorList>
    </citation>
    <scope>NUCLEOTIDE SEQUENCE [LARGE SCALE GENOMIC DNA]</scope>
</reference>
<reference key="3">
    <citation type="submission" date="2005-07" db="EMBL/GenBank/DDBJ databases">
        <authorList>
            <person name="Mural R.J."/>
            <person name="Istrail S."/>
            <person name="Sutton G.G."/>
            <person name="Florea L."/>
            <person name="Halpern A.L."/>
            <person name="Mobarry C.M."/>
            <person name="Lippert R."/>
            <person name="Walenz B."/>
            <person name="Shatkay H."/>
            <person name="Dew I."/>
            <person name="Miller J.R."/>
            <person name="Flanigan M.J."/>
            <person name="Edwards N.J."/>
            <person name="Bolanos R."/>
            <person name="Fasulo D."/>
            <person name="Halldorsson B.V."/>
            <person name="Hannenhalli S."/>
            <person name="Turner R."/>
            <person name="Yooseph S."/>
            <person name="Lu F."/>
            <person name="Nusskern D.R."/>
            <person name="Shue B.C."/>
            <person name="Zheng X.H."/>
            <person name="Zhong F."/>
            <person name="Delcher A.L."/>
            <person name="Huson D.H."/>
            <person name="Kravitz S.A."/>
            <person name="Mouchard L."/>
            <person name="Reinert K."/>
            <person name="Remington K.A."/>
            <person name="Clark A.G."/>
            <person name="Waterman M.S."/>
            <person name="Eichler E.E."/>
            <person name="Adams M.D."/>
            <person name="Hunkapiller M.W."/>
            <person name="Myers E.W."/>
            <person name="Venter J.C."/>
        </authorList>
    </citation>
    <scope>NUCLEOTIDE SEQUENCE [LARGE SCALE GENOMIC DNA]</scope>
</reference>
<reference key="4">
    <citation type="journal article" date="2004" name="Genome Res.">
        <title>The status, quality, and expansion of the NIH full-length cDNA project: the Mammalian Gene Collection (MGC).</title>
        <authorList>
            <consortium name="The MGC Project Team"/>
        </authorList>
    </citation>
    <scope>NUCLEOTIDE SEQUENCE [LARGE SCALE MRNA]</scope>
    <scope>VARIANT ALA-441</scope>
    <source>
        <tissue>Brain</tissue>
    </source>
</reference>
<reference key="5">
    <citation type="journal article" date="1999" name="Genomics">
        <title>CAPN11: a calpain with high mRNA levels in testis and located on chromosome 6.</title>
        <authorList>
            <person name="Dear T.N."/>
            <person name="Moller A."/>
            <person name="Boehm T."/>
        </authorList>
    </citation>
    <scope>NUCLEOTIDE SEQUENCE [MRNA] OF 4-739</scope>
    <scope>TISSUE SPECIFICITY</scope>
</reference>
<name>CAN11_HUMAN</name>
<gene>
    <name type="primary">CAPN11</name>
</gene>
<comment type="function">
    <text>Calcium-regulated non-lysosomal thiol-protease which catalyzes limited proteolysis of substrates involved in cytoskeletal remodeling and signal transduction.</text>
</comment>
<comment type="subunit">
    <text>Heterodimer of a large (catalytic) and a small (regulatory) subunit.</text>
</comment>
<comment type="subcellular location">
    <subcellularLocation>
        <location evidence="1">Cytoplasmic vesicle</location>
        <location evidence="1">Secretory vesicle</location>
        <location evidence="1">Acrosome</location>
    </subcellularLocation>
</comment>
<comment type="tissue specificity">
    <text evidence="5">Highest expression in testis.</text>
</comment>
<comment type="similarity">
    <text evidence="7">Belongs to the peptidase C2 family.</text>
</comment>
<comment type="sequence caution" evidence="7">
    <conflict type="erroneous initiation">
        <sequence resource="EMBL-CDS" id="AAH33733"/>
    </conflict>
</comment>
<comment type="sequence caution" evidence="7">
    <conflict type="erroneous initiation">
        <sequence resource="EMBL-CDS" id="BAG36761"/>
    </conflict>
</comment>
<comment type="sequence caution" evidence="7">
    <conflict type="erroneous initiation">
        <sequence resource="EMBL-CDS" id="CAB52137"/>
    </conflict>
</comment>